<keyword id="KW-0067">ATP-binding</keyword>
<keyword id="KW-0436">Ligase</keyword>
<keyword id="KW-0479">Metal-binding</keyword>
<keyword id="KW-0547">Nucleotide-binding</keyword>
<keyword id="KW-0671">Queuosine biosynthesis</keyword>
<keyword id="KW-0862">Zinc</keyword>
<organism>
    <name type="scientific">Rickettsia felis (strain ATCC VR-1525 / URRWXCal2)</name>
    <name type="common">Rickettsia azadi</name>
    <dbReference type="NCBI Taxonomy" id="315456"/>
    <lineage>
        <taxon>Bacteria</taxon>
        <taxon>Pseudomonadati</taxon>
        <taxon>Pseudomonadota</taxon>
        <taxon>Alphaproteobacteria</taxon>
        <taxon>Rickettsiales</taxon>
        <taxon>Rickettsiaceae</taxon>
        <taxon>Rickettsieae</taxon>
        <taxon>Rickettsia</taxon>
        <taxon>spotted fever group</taxon>
    </lineage>
</organism>
<proteinExistence type="inferred from homology"/>
<dbReference type="EC" id="6.3.4.20" evidence="1"/>
<dbReference type="EMBL" id="CP000053">
    <property type="protein sequence ID" value="AAY61068.1"/>
    <property type="molecule type" value="Genomic_DNA"/>
</dbReference>
<dbReference type="SMR" id="Q4UMZ0"/>
<dbReference type="STRING" id="315456.RF_0217"/>
<dbReference type="KEGG" id="rfe:RF_0217"/>
<dbReference type="eggNOG" id="COG0603">
    <property type="taxonomic scope" value="Bacteria"/>
</dbReference>
<dbReference type="HOGENOM" id="CLU_081854_1_1_5"/>
<dbReference type="OrthoDB" id="9789567at2"/>
<dbReference type="UniPathway" id="UPA00391"/>
<dbReference type="Proteomes" id="UP000008548">
    <property type="component" value="Chromosome"/>
</dbReference>
<dbReference type="GO" id="GO:0005524">
    <property type="term" value="F:ATP binding"/>
    <property type="evidence" value="ECO:0007669"/>
    <property type="project" value="UniProtKB-UniRule"/>
</dbReference>
<dbReference type="GO" id="GO:0016879">
    <property type="term" value="F:ligase activity, forming carbon-nitrogen bonds"/>
    <property type="evidence" value="ECO:0007669"/>
    <property type="project" value="UniProtKB-UniRule"/>
</dbReference>
<dbReference type="GO" id="GO:0008270">
    <property type="term" value="F:zinc ion binding"/>
    <property type="evidence" value="ECO:0007669"/>
    <property type="project" value="UniProtKB-UniRule"/>
</dbReference>
<dbReference type="GO" id="GO:0008616">
    <property type="term" value="P:queuosine biosynthetic process"/>
    <property type="evidence" value="ECO:0007669"/>
    <property type="project" value="UniProtKB-UniRule"/>
</dbReference>
<dbReference type="CDD" id="cd01995">
    <property type="entry name" value="QueC-like"/>
    <property type="match status" value="1"/>
</dbReference>
<dbReference type="Gene3D" id="3.40.50.620">
    <property type="entry name" value="HUPs"/>
    <property type="match status" value="1"/>
</dbReference>
<dbReference type="HAMAP" id="MF_01633">
    <property type="entry name" value="QueC"/>
    <property type="match status" value="1"/>
</dbReference>
<dbReference type="InterPro" id="IPR018317">
    <property type="entry name" value="QueC"/>
</dbReference>
<dbReference type="InterPro" id="IPR014729">
    <property type="entry name" value="Rossmann-like_a/b/a_fold"/>
</dbReference>
<dbReference type="NCBIfam" id="TIGR00364">
    <property type="entry name" value="7-cyano-7-deazaguanine synthase QueC"/>
    <property type="match status" value="1"/>
</dbReference>
<dbReference type="PANTHER" id="PTHR42914">
    <property type="entry name" value="7-CYANO-7-DEAZAGUANINE SYNTHASE"/>
    <property type="match status" value="1"/>
</dbReference>
<dbReference type="PANTHER" id="PTHR42914:SF1">
    <property type="entry name" value="7-CYANO-7-DEAZAGUANINE SYNTHASE"/>
    <property type="match status" value="1"/>
</dbReference>
<dbReference type="Pfam" id="PF06508">
    <property type="entry name" value="QueC"/>
    <property type="match status" value="1"/>
</dbReference>
<dbReference type="PIRSF" id="PIRSF006293">
    <property type="entry name" value="ExsB"/>
    <property type="match status" value="1"/>
</dbReference>
<dbReference type="SUPFAM" id="SSF52402">
    <property type="entry name" value="Adenine nucleotide alpha hydrolases-like"/>
    <property type="match status" value="1"/>
</dbReference>
<feature type="chain" id="PRO_0000246913" description="7-cyano-7-deazaguanine synthase">
    <location>
        <begin position="1"/>
        <end position="224"/>
    </location>
</feature>
<feature type="binding site" evidence="1">
    <location>
        <begin position="8"/>
        <end position="18"/>
    </location>
    <ligand>
        <name>ATP</name>
        <dbReference type="ChEBI" id="CHEBI:30616"/>
    </ligand>
</feature>
<feature type="binding site" evidence="1">
    <location>
        <position position="189"/>
    </location>
    <ligand>
        <name>Zn(2+)</name>
        <dbReference type="ChEBI" id="CHEBI:29105"/>
    </ligand>
</feature>
<feature type="binding site" evidence="1">
    <location>
        <position position="199"/>
    </location>
    <ligand>
        <name>Zn(2+)</name>
        <dbReference type="ChEBI" id="CHEBI:29105"/>
    </ligand>
</feature>
<feature type="binding site" evidence="1">
    <location>
        <position position="202"/>
    </location>
    <ligand>
        <name>Zn(2+)</name>
        <dbReference type="ChEBI" id="CHEBI:29105"/>
    </ligand>
</feature>
<feature type="binding site" evidence="1">
    <location>
        <position position="205"/>
    </location>
    <ligand>
        <name>Zn(2+)</name>
        <dbReference type="ChEBI" id="CHEBI:29105"/>
    </ligand>
</feature>
<sequence>MKKAVILVSGGADSATVLAIAREMGYEIHAMSFNYGQRNNAELRKVKELIKEYNVKQHKIVYIDLRAFGGSALTDNNIDVPHYHDVNELPEDVPVTYVPARNTIFLSYALGYAEVIGAKDIFIGVHTSDSANYPDCRPEYIKSFEEMANLATNIGNRITIHTPLIDMAKEQIIKTGLELGVDYKNTISCYDPTEDDLSCGNCLACMIRLDAFKKNNVQDPINYV</sequence>
<protein>
    <recommendedName>
        <fullName evidence="1">7-cyano-7-deazaguanine synthase</fullName>
        <ecNumber evidence="1">6.3.4.20</ecNumber>
    </recommendedName>
    <alternativeName>
        <fullName evidence="1">7-cyano-7-carbaguanine synthase</fullName>
    </alternativeName>
    <alternativeName>
        <fullName evidence="1">PreQ(0) synthase</fullName>
    </alternativeName>
    <alternativeName>
        <fullName evidence="1">Queuosine biosynthesis protein QueC</fullName>
    </alternativeName>
</protein>
<reference key="1">
    <citation type="journal article" date="2005" name="PLoS Biol.">
        <title>The genome sequence of Rickettsia felis identifies the first putative conjugative plasmid in an obligate intracellular parasite.</title>
        <authorList>
            <person name="Ogata H."/>
            <person name="Renesto P."/>
            <person name="Audic S."/>
            <person name="Robert C."/>
            <person name="Blanc G."/>
            <person name="Fournier P.-E."/>
            <person name="Parinello H."/>
            <person name="Claverie J.-M."/>
            <person name="Raoult D."/>
        </authorList>
    </citation>
    <scope>NUCLEOTIDE SEQUENCE [LARGE SCALE GENOMIC DNA]</scope>
    <source>
        <strain>ATCC VR-1525 / URRWXCal2</strain>
    </source>
</reference>
<accession>Q4UMZ0</accession>
<gene>
    <name evidence="1" type="primary">queC</name>
    <name type="ordered locus">RF_0217</name>
</gene>
<name>QUEC_RICFE</name>
<evidence type="ECO:0000255" key="1">
    <source>
        <dbReference type="HAMAP-Rule" id="MF_01633"/>
    </source>
</evidence>
<comment type="function">
    <text evidence="1">Catalyzes the ATP-dependent conversion of 7-carboxy-7-deazaguanine (CDG) to 7-cyano-7-deazaguanine (preQ(0)).</text>
</comment>
<comment type="catalytic activity">
    <reaction evidence="1">
        <text>7-carboxy-7-deazaguanine + NH4(+) + ATP = 7-cyano-7-deazaguanine + ADP + phosphate + H2O + H(+)</text>
        <dbReference type="Rhea" id="RHEA:27982"/>
        <dbReference type="ChEBI" id="CHEBI:15377"/>
        <dbReference type="ChEBI" id="CHEBI:15378"/>
        <dbReference type="ChEBI" id="CHEBI:28938"/>
        <dbReference type="ChEBI" id="CHEBI:30616"/>
        <dbReference type="ChEBI" id="CHEBI:43474"/>
        <dbReference type="ChEBI" id="CHEBI:45075"/>
        <dbReference type="ChEBI" id="CHEBI:61036"/>
        <dbReference type="ChEBI" id="CHEBI:456216"/>
        <dbReference type="EC" id="6.3.4.20"/>
    </reaction>
</comment>
<comment type="cofactor">
    <cofactor evidence="1">
        <name>Zn(2+)</name>
        <dbReference type="ChEBI" id="CHEBI:29105"/>
    </cofactor>
    <text evidence="1">Binds 1 zinc ion per subunit.</text>
</comment>
<comment type="pathway">
    <text evidence="1">Purine metabolism; 7-cyano-7-deazaguanine biosynthesis.</text>
</comment>
<comment type="similarity">
    <text evidence="1">Belongs to the QueC family.</text>
</comment>